<evidence type="ECO:0000255" key="1">
    <source>
        <dbReference type="HAMAP-Rule" id="MF_01810"/>
    </source>
</evidence>
<feature type="chain" id="PRO_1000070060" description="Membrane protein insertase YidC">
    <location>
        <begin position="1"/>
        <end position="621"/>
    </location>
</feature>
<feature type="transmembrane region" description="Helical" evidence="1">
    <location>
        <begin position="1"/>
        <end position="21"/>
    </location>
</feature>
<feature type="transmembrane region" description="Helical" evidence="1">
    <location>
        <begin position="363"/>
        <end position="383"/>
    </location>
</feature>
<feature type="transmembrane region" description="Helical" evidence="1">
    <location>
        <begin position="436"/>
        <end position="456"/>
    </location>
</feature>
<feature type="transmembrane region" description="Helical" evidence="1">
    <location>
        <begin position="486"/>
        <end position="506"/>
    </location>
</feature>
<feature type="transmembrane region" description="Helical" evidence="1">
    <location>
        <begin position="527"/>
        <end position="547"/>
    </location>
</feature>
<feature type="transmembrane region" description="Helical" evidence="1">
    <location>
        <begin position="549"/>
        <end position="569"/>
    </location>
</feature>
<sequence>MDKNTLVGFALIGAVVIGFSIYNRPSQEEMARAKHYQDSIQAIAQKEAERLAQAATAQSQNATLHLDSTSMFYGANQGTEQLTTLENNVVKLTFTNKGGRVCAAILKDYNGQDGKPLMLFDEKDSGMNFAFEGKNENILTEDMYFQPTNVTDSTVTMRLAANNGGYIDFDYKLLPDAYMVNFTIRANGMQNFFPPALNTVNINWRQRARQLEKGFSFEQRYTSLTYKPVEKSSDYLNEMKEAKEDVTDRLDWIAFKNQFFSSVLIADQDFDKASLTSTPQQEGSGYMKNYTADMTTFFDPTGKQPTDMQFYFGPNHFKTLLNSNDLSLSQKDLELEDLVYLGWPIIRWVNRWFTINLFDWLSGWGLSMGVVLLLMTIIVKVLVYPATYKSYMSSAKMRVLKPYINEINAKYPKKEDALKKQQETMALYSKYGVSPMGGCLPMLIQMPVFMALFFFVPNAIELRQQSFLWAPDLSTYDDIINWGTNIPLLGNHLSLFCLLFSITNILNTMYTMKQQDMGQQQMPGMKLMMYIMPVMFIFIFNGYSSGLNYYYFISGLIGILTMVILRKTTDEKKLLAMLEARKEKKSQKNGGKPGGGLMAKLEALQKEQERLQQERMNKGKK</sequence>
<protein>
    <recommendedName>
        <fullName evidence="1">Membrane protein insertase YidC</fullName>
    </recommendedName>
    <alternativeName>
        <fullName evidence="1">Foldase YidC</fullName>
    </alternativeName>
    <alternativeName>
        <fullName evidence="1">Membrane integrase YidC</fullName>
    </alternativeName>
    <alternativeName>
        <fullName evidence="1">Membrane protein YidC</fullName>
    </alternativeName>
</protein>
<proteinExistence type="inferred from homology"/>
<comment type="function">
    <text evidence="1">Required for the insertion and/or proper folding and/or complex formation of integral membrane proteins into the membrane. Involved in integration of membrane proteins that insert both dependently and independently of the Sec translocase complex, as well as at least some lipoproteins. Aids folding of multispanning membrane proteins.</text>
</comment>
<comment type="subunit">
    <text evidence="1">Interacts with the Sec translocase complex via SecD. Specifically interacts with transmembrane segments of nascent integral membrane proteins during membrane integration.</text>
</comment>
<comment type="subcellular location">
    <subcellularLocation>
        <location evidence="1">Cell inner membrane</location>
        <topology evidence="1">Multi-pass membrane protein</topology>
    </subcellularLocation>
</comment>
<comment type="similarity">
    <text evidence="1">Belongs to the OXA1/ALB3/YidC family. Type 1 subfamily.</text>
</comment>
<name>YIDC_PHOV8</name>
<keyword id="KW-0997">Cell inner membrane</keyword>
<keyword id="KW-1003">Cell membrane</keyword>
<keyword id="KW-0143">Chaperone</keyword>
<keyword id="KW-0472">Membrane</keyword>
<keyword id="KW-0653">Protein transport</keyword>
<keyword id="KW-0812">Transmembrane</keyword>
<keyword id="KW-1133">Transmembrane helix</keyword>
<keyword id="KW-0813">Transport</keyword>
<accession>A6L5L6</accession>
<dbReference type="EMBL" id="CP000139">
    <property type="protein sequence ID" value="ABR40980.1"/>
    <property type="molecule type" value="Genomic_DNA"/>
</dbReference>
<dbReference type="RefSeq" id="WP_005840021.1">
    <property type="nucleotide sequence ID" value="NZ_JANSWM010000114.1"/>
</dbReference>
<dbReference type="SMR" id="A6L5L6"/>
<dbReference type="STRING" id="435590.BVU_3354"/>
<dbReference type="PaxDb" id="435590-BVU_3354"/>
<dbReference type="GeneID" id="5304315"/>
<dbReference type="KEGG" id="bvu:BVU_3354"/>
<dbReference type="eggNOG" id="COG0706">
    <property type="taxonomic scope" value="Bacteria"/>
</dbReference>
<dbReference type="HOGENOM" id="CLU_016535_2_0_10"/>
<dbReference type="BioCyc" id="BVUL435590:G1G59-3476-MONOMER"/>
<dbReference type="Proteomes" id="UP000002861">
    <property type="component" value="Chromosome"/>
</dbReference>
<dbReference type="GO" id="GO:0005886">
    <property type="term" value="C:plasma membrane"/>
    <property type="evidence" value="ECO:0007669"/>
    <property type="project" value="UniProtKB-SubCell"/>
</dbReference>
<dbReference type="GO" id="GO:0032977">
    <property type="term" value="F:membrane insertase activity"/>
    <property type="evidence" value="ECO:0007669"/>
    <property type="project" value="InterPro"/>
</dbReference>
<dbReference type="GO" id="GO:0051205">
    <property type="term" value="P:protein insertion into membrane"/>
    <property type="evidence" value="ECO:0007669"/>
    <property type="project" value="TreeGrafter"/>
</dbReference>
<dbReference type="GO" id="GO:0015031">
    <property type="term" value="P:protein transport"/>
    <property type="evidence" value="ECO:0007669"/>
    <property type="project" value="UniProtKB-KW"/>
</dbReference>
<dbReference type="CDD" id="cd20070">
    <property type="entry name" value="5TM_YidC_Alb3"/>
    <property type="match status" value="1"/>
</dbReference>
<dbReference type="CDD" id="cd19961">
    <property type="entry name" value="EcYidC-like_peri"/>
    <property type="match status" value="1"/>
</dbReference>
<dbReference type="Gene3D" id="2.70.98.90">
    <property type="match status" value="1"/>
</dbReference>
<dbReference type="HAMAP" id="MF_01810">
    <property type="entry name" value="YidC_type1"/>
    <property type="match status" value="1"/>
</dbReference>
<dbReference type="InterPro" id="IPR019998">
    <property type="entry name" value="Membr_insert_YidC"/>
</dbReference>
<dbReference type="InterPro" id="IPR028053">
    <property type="entry name" value="Membr_insert_YidC_N"/>
</dbReference>
<dbReference type="InterPro" id="IPR001708">
    <property type="entry name" value="YidC/ALB3/OXA1/COX18"/>
</dbReference>
<dbReference type="InterPro" id="IPR028055">
    <property type="entry name" value="YidC/Oxa/ALB_C"/>
</dbReference>
<dbReference type="InterPro" id="IPR047196">
    <property type="entry name" value="YidC_ALB_C"/>
</dbReference>
<dbReference type="InterPro" id="IPR038221">
    <property type="entry name" value="YidC_periplasmic_sf"/>
</dbReference>
<dbReference type="NCBIfam" id="NF002356">
    <property type="entry name" value="PRK01318.2-3"/>
    <property type="match status" value="1"/>
</dbReference>
<dbReference type="NCBIfam" id="TIGR03593">
    <property type="entry name" value="yidC_nterm"/>
    <property type="match status" value="1"/>
</dbReference>
<dbReference type="NCBIfam" id="TIGR03592">
    <property type="entry name" value="yidC_oxa1_cterm"/>
    <property type="match status" value="1"/>
</dbReference>
<dbReference type="PANTHER" id="PTHR12428:SF65">
    <property type="entry name" value="CYTOCHROME C OXIDASE ASSEMBLY PROTEIN COX18, MITOCHONDRIAL"/>
    <property type="match status" value="1"/>
</dbReference>
<dbReference type="PANTHER" id="PTHR12428">
    <property type="entry name" value="OXA1"/>
    <property type="match status" value="1"/>
</dbReference>
<dbReference type="Pfam" id="PF02096">
    <property type="entry name" value="60KD_IMP"/>
    <property type="match status" value="1"/>
</dbReference>
<dbReference type="Pfam" id="PF14849">
    <property type="entry name" value="YidC_periplas"/>
    <property type="match status" value="1"/>
</dbReference>
<dbReference type="PRINTS" id="PR00701">
    <property type="entry name" value="60KDINNERMP"/>
</dbReference>
<organism>
    <name type="scientific">Phocaeicola vulgatus (strain ATCC 8482 / DSM 1447 / JCM 5826 / CCUG 4940 / NBRC 14291 / NCTC 11154)</name>
    <name type="common">Bacteroides vulgatus</name>
    <dbReference type="NCBI Taxonomy" id="435590"/>
    <lineage>
        <taxon>Bacteria</taxon>
        <taxon>Pseudomonadati</taxon>
        <taxon>Bacteroidota</taxon>
        <taxon>Bacteroidia</taxon>
        <taxon>Bacteroidales</taxon>
        <taxon>Bacteroidaceae</taxon>
        <taxon>Phocaeicola</taxon>
    </lineage>
</organism>
<gene>
    <name evidence="1" type="primary">yidC</name>
    <name type="ordered locus">BVU_3354</name>
</gene>
<reference key="1">
    <citation type="journal article" date="2007" name="PLoS Biol.">
        <title>Evolution of symbiotic bacteria in the distal human intestine.</title>
        <authorList>
            <person name="Xu J."/>
            <person name="Mahowald M.A."/>
            <person name="Ley R.E."/>
            <person name="Lozupone C.A."/>
            <person name="Hamady M."/>
            <person name="Martens E.C."/>
            <person name="Henrissat B."/>
            <person name="Coutinho P.M."/>
            <person name="Minx P."/>
            <person name="Latreille P."/>
            <person name="Cordum H."/>
            <person name="Van Brunt A."/>
            <person name="Kim K."/>
            <person name="Fulton R.S."/>
            <person name="Fulton L.A."/>
            <person name="Clifton S.W."/>
            <person name="Wilson R.K."/>
            <person name="Knight R.D."/>
            <person name="Gordon J.I."/>
        </authorList>
    </citation>
    <scope>NUCLEOTIDE SEQUENCE [LARGE SCALE GENOMIC DNA]</scope>
    <source>
        <strain>ATCC 8482 / DSM 1447 / JCM 5826 / CCUG 4940 / NBRC 14291 / NCTC 11154</strain>
    </source>
</reference>